<feature type="signal peptide" evidence="2">
    <location>
        <begin position="1"/>
        <end position="18"/>
    </location>
</feature>
<feature type="chain" id="PRO_0000403820" description="Neurotoxin LmNaTx34.2">
    <location>
        <begin position="19"/>
        <end position="86"/>
    </location>
</feature>
<feature type="domain" description="LCN-type CS-alpha/beta" evidence="3">
    <location>
        <begin position="19"/>
        <end position="85"/>
    </location>
</feature>
<feature type="disulfide bond" evidence="3">
    <location>
        <begin position="32"/>
        <end position="84"/>
    </location>
</feature>
<feature type="disulfide bond" evidence="3">
    <location>
        <begin position="36"/>
        <end position="57"/>
    </location>
</feature>
<feature type="disulfide bond" evidence="3">
    <location>
        <begin position="43"/>
        <end position="64"/>
    </location>
</feature>
<feature type="disulfide bond" evidence="3">
    <location>
        <begin position="47"/>
        <end position="66"/>
    </location>
</feature>
<name>SNAY2_LYCMC</name>
<dbReference type="EMBL" id="GT028830">
    <property type="status" value="NOT_ANNOTATED_CDS"/>
    <property type="molecule type" value="mRNA"/>
</dbReference>
<dbReference type="SMR" id="P0CI59"/>
<dbReference type="GO" id="GO:0005576">
    <property type="term" value="C:extracellular region"/>
    <property type="evidence" value="ECO:0007669"/>
    <property type="project" value="UniProtKB-SubCell"/>
</dbReference>
<dbReference type="GO" id="GO:0019871">
    <property type="term" value="F:sodium channel inhibitor activity"/>
    <property type="evidence" value="ECO:0007669"/>
    <property type="project" value="InterPro"/>
</dbReference>
<dbReference type="GO" id="GO:0090729">
    <property type="term" value="F:toxin activity"/>
    <property type="evidence" value="ECO:0007669"/>
    <property type="project" value="UniProtKB-KW"/>
</dbReference>
<dbReference type="GO" id="GO:0006952">
    <property type="term" value="P:defense response"/>
    <property type="evidence" value="ECO:0007669"/>
    <property type="project" value="InterPro"/>
</dbReference>
<dbReference type="CDD" id="cd23106">
    <property type="entry name" value="neurotoxins_LC_scorpion"/>
    <property type="match status" value="1"/>
</dbReference>
<dbReference type="Gene3D" id="3.30.30.10">
    <property type="entry name" value="Knottin, scorpion toxin-like"/>
    <property type="match status" value="1"/>
</dbReference>
<dbReference type="InterPro" id="IPR044062">
    <property type="entry name" value="LCN-type_CS_alpha_beta_dom"/>
</dbReference>
<dbReference type="InterPro" id="IPR003614">
    <property type="entry name" value="Scorpion_toxin-like"/>
</dbReference>
<dbReference type="InterPro" id="IPR036574">
    <property type="entry name" value="Scorpion_toxin-like_sf"/>
</dbReference>
<dbReference type="InterPro" id="IPR018218">
    <property type="entry name" value="Scorpion_toxinL"/>
</dbReference>
<dbReference type="InterPro" id="IPR002061">
    <property type="entry name" value="Scorpion_toxinL/defensin"/>
</dbReference>
<dbReference type="Pfam" id="PF00537">
    <property type="entry name" value="Toxin_3"/>
    <property type="match status" value="1"/>
</dbReference>
<dbReference type="PRINTS" id="PR00285">
    <property type="entry name" value="SCORPNTOXIN"/>
</dbReference>
<dbReference type="SMART" id="SM00505">
    <property type="entry name" value="Knot1"/>
    <property type="match status" value="1"/>
</dbReference>
<dbReference type="SUPFAM" id="SSF57095">
    <property type="entry name" value="Scorpion toxin-like"/>
    <property type="match status" value="1"/>
</dbReference>
<dbReference type="PROSITE" id="PS51863">
    <property type="entry name" value="LCN_CSAB"/>
    <property type="match status" value="1"/>
</dbReference>
<proteinExistence type="evidence at transcript level"/>
<protein>
    <recommendedName>
        <fullName>Neurotoxin LmNaTx34.2</fullName>
    </recommendedName>
</protein>
<reference key="1">
    <citation type="journal article" date="2010" name="BMC Genomics">
        <title>Comparative venom gland transcriptome analysis of the scorpion Lychas mucronatus reveals intraspecific toxic gene diversity and new venomous components.</title>
        <authorList>
            <person name="Zhao R."/>
            <person name="Ma Y."/>
            <person name="He Y."/>
            <person name="Di Z."/>
            <person name="Wu Y.-L."/>
            <person name="Cao Z.-J."/>
            <person name="Li W.-X."/>
        </authorList>
    </citation>
    <scope>NUCLEOTIDE SEQUENCE [MRNA]</scope>
    <source>
        <strain>Yunnan</strain>
        <tissue>Venom gland</tissue>
    </source>
</reference>
<keyword id="KW-1015">Disulfide bond</keyword>
<keyword id="KW-0872">Ion channel impairing toxin</keyword>
<keyword id="KW-0528">Neurotoxin</keyword>
<keyword id="KW-0964">Secreted</keyword>
<keyword id="KW-0732">Signal</keyword>
<keyword id="KW-0800">Toxin</keyword>
<keyword id="KW-0738">Voltage-gated sodium channel impairing toxin</keyword>
<sequence length="86" mass="9840">MKTLILVVIALMVIEVKSDGYLMVRAGREKGCKIWCVINNEYCDKDCKLKGGNYGYCYFWKLACYCEGLPTSSPDIWTYEKNTCST</sequence>
<organism>
    <name type="scientific">Lychas mucronatus</name>
    <name type="common">Chinese swimming scorpion</name>
    <dbReference type="NCBI Taxonomy" id="172552"/>
    <lineage>
        <taxon>Eukaryota</taxon>
        <taxon>Metazoa</taxon>
        <taxon>Ecdysozoa</taxon>
        <taxon>Arthropoda</taxon>
        <taxon>Chelicerata</taxon>
        <taxon>Arachnida</taxon>
        <taxon>Scorpiones</taxon>
        <taxon>Buthida</taxon>
        <taxon>Buthoidea</taxon>
        <taxon>Buthidae</taxon>
        <taxon>Lychas</taxon>
    </lineage>
</organism>
<evidence type="ECO:0000250" key="1"/>
<evidence type="ECO:0000255" key="2"/>
<evidence type="ECO:0000255" key="3">
    <source>
        <dbReference type="PROSITE-ProRule" id="PRU01210"/>
    </source>
</evidence>
<evidence type="ECO:0000305" key="4"/>
<accession>P0CI59</accession>
<comment type="function">
    <text evidence="1">Binds voltage-independently at site-4 of sodium channels (Nav) and shift the voltage of activation toward more negative potentials thereby affecting sodium channel activation and promoting spontaneous and repetitive firing.</text>
</comment>
<comment type="subcellular location">
    <subcellularLocation>
        <location evidence="1">Secreted</location>
    </subcellularLocation>
</comment>
<comment type="tissue specificity">
    <text>Expressed by the venom gland.</text>
</comment>
<comment type="domain">
    <text evidence="4">Has the structural arrangement of an alpha-helix connected to antiparallel beta-sheets by disulfide bonds (CS-alpha/beta).</text>
</comment>
<comment type="similarity">
    <text evidence="4">Belongs to the long (4 C-C) scorpion toxin superfamily. Sodium channel inhibitor family. Beta subfamily.</text>
</comment>